<keyword id="KW-0004">4Fe-4S</keyword>
<keyword id="KW-0963">Cytoplasm</keyword>
<keyword id="KW-0408">Iron</keyword>
<keyword id="KW-0411">Iron-sulfur</keyword>
<keyword id="KW-0479">Metal-binding</keyword>
<keyword id="KW-0949">S-adenosyl-L-methionine</keyword>
<keyword id="KW-0808">Transferase</keyword>
<feature type="chain" id="PRO_1000191449" description="Lipoyl synthase">
    <location>
        <begin position="1"/>
        <end position="321"/>
    </location>
</feature>
<feature type="domain" description="Radical SAM core" evidence="2">
    <location>
        <begin position="80"/>
        <end position="297"/>
    </location>
</feature>
<feature type="binding site" evidence="1">
    <location>
        <position position="68"/>
    </location>
    <ligand>
        <name>[4Fe-4S] cluster</name>
        <dbReference type="ChEBI" id="CHEBI:49883"/>
        <label>1</label>
    </ligand>
</feature>
<feature type="binding site" evidence="1">
    <location>
        <position position="73"/>
    </location>
    <ligand>
        <name>[4Fe-4S] cluster</name>
        <dbReference type="ChEBI" id="CHEBI:49883"/>
        <label>1</label>
    </ligand>
</feature>
<feature type="binding site" evidence="1">
    <location>
        <position position="79"/>
    </location>
    <ligand>
        <name>[4Fe-4S] cluster</name>
        <dbReference type="ChEBI" id="CHEBI:49883"/>
        <label>1</label>
    </ligand>
</feature>
<feature type="binding site" evidence="1">
    <location>
        <position position="94"/>
    </location>
    <ligand>
        <name>[4Fe-4S] cluster</name>
        <dbReference type="ChEBI" id="CHEBI:49883"/>
        <label>2</label>
        <note>4Fe-4S-S-AdoMet</note>
    </ligand>
</feature>
<feature type="binding site" evidence="1">
    <location>
        <position position="98"/>
    </location>
    <ligand>
        <name>[4Fe-4S] cluster</name>
        <dbReference type="ChEBI" id="CHEBI:49883"/>
        <label>2</label>
        <note>4Fe-4S-S-AdoMet</note>
    </ligand>
</feature>
<feature type="binding site" evidence="1">
    <location>
        <position position="101"/>
    </location>
    <ligand>
        <name>[4Fe-4S] cluster</name>
        <dbReference type="ChEBI" id="CHEBI:49883"/>
        <label>2</label>
        <note>4Fe-4S-S-AdoMet</note>
    </ligand>
</feature>
<feature type="binding site" evidence="1">
    <location>
        <position position="308"/>
    </location>
    <ligand>
        <name>[4Fe-4S] cluster</name>
        <dbReference type="ChEBI" id="CHEBI:49883"/>
        <label>1</label>
    </ligand>
</feature>
<comment type="function">
    <text evidence="1">Catalyzes the radical-mediated insertion of two sulfur atoms into the C-6 and C-8 positions of the octanoyl moiety bound to the lipoyl domains of lipoate-dependent enzymes, thereby converting the octanoylated domains into lipoylated derivatives.</text>
</comment>
<comment type="catalytic activity">
    <reaction evidence="1">
        <text>[[Fe-S] cluster scaffold protein carrying a second [4Fe-4S](2+) cluster] + N(6)-octanoyl-L-lysyl-[protein] + 2 oxidized [2Fe-2S]-[ferredoxin] + 2 S-adenosyl-L-methionine + 4 H(+) = [[Fe-S] cluster scaffold protein] + N(6)-[(R)-dihydrolipoyl]-L-lysyl-[protein] + 4 Fe(3+) + 2 hydrogen sulfide + 2 5'-deoxyadenosine + 2 L-methionine + 2 reduced [2Fe-2S]-[ferredoxin]</text>
        <dbReference type="Rhea" id="RHEA:16585"/>
        <dbReference type="Rhea" id="RHEA-COMP:9928"/>
        <dbReference type="Rhea" id="RHEA-COMP:10000"/>
        <dbReference type="Rhea" id="RHEA-COMP:10001"/>
        <dbReference type="Rhea" id="RHEA-COMP:10475"/>
        <dbReference type="Rhea" id="RHEA-COMP:14568"/>
        <dbReference type="Rhea" id="RHEA-COMP:14569"/>
        <dbReference type="ChEBI" id="CHEBI:15378"/>
        <dbReference type="ChEBI" id="CHEBI:17319"/>
        <dbReference type="ChEBI" id="CHEBI:29034"/>
        <dbReference type="ChEBI" id="CHEBI:29919"/>
        <dbReference type="ChEBI" id="CHEBI:33722"/>
        <dbReference type="ChEBI" id="CHEBI:33737"/>
        <dbReference type="ChEBI" id="CHEBI:33738"/>
        <dbReference type="ChEBI" id="CHEBI:57844"/>
        <dbReference type="ChEBI" id="CHEBI:59789"/>
        <dbReference type="ChEBI" id="CHEBI:78809"/>
        <dbReference type="ChEBI" id="CHEBI:83100"/>
        <dbReference type="EC" id="2.8.1.8"/>
    </reaction>
</comment>
<comment type="cofactor">
    <cofactor evidence="1">
        <name>[4Fe-4S] cluster</name>
        <dbReference type="ChEBI" id="CHEBI:49883"/>
    </cofactor>
    <text evidence="1">Binds 2 [4Fe-4S] clusters per subunit. One cluster is coordinated with 3 cysteines and an exchangeable S-adenosyl-L-methionine.</text>
</comment>
<comment type="pathway">
    <text evidence="1">Protein modification; protein lipoylation via endogenous pathway; protein N(6)-(lipoyl)lysine from octanoyl-[acyl-carrier-protein]: step 2/2.</text>
</comment>
<comment type="subcellular location">
    <subcellularLocation>
        <location evidence="1">Cytoplasm</location>
    </subcellularLocation>
</comment>
<comment type="similarity">
    <text evidence="1">Belongs to the radical SAM superfamily. Lipoyl synthase family.</text>
</comment>
<evidence type="ECO:0000255" key="1">
    <source>
        <dbReference type="HAMAP-Rule" id="MF_00206"/>
    </source>
</evidence>
<evidence type="ECO:0000255" key="2">
    <source>
        <dbReference type="PROSITE-ProRule" id="PRU01266"/>
    </source>
</evidence>
<name>LIPA_ECOLU</name>
<sequence length="321" mass="36072">MSKPIVMERGVKYRDADKMALIPVKNVATEREALLRKPEWMKIKLPADSTRIQGIKAAMRKNGLHSVCEEASCPNLAECFNHGTATFMILGAICTRRCPFCDVAHGRPVAPDANEPVKLAQTIADMALRYVVITSVDRDDLRDGGAQHFADCITAIREKSPQIKIETLVPDFRGRMDRALDILTATPPDVFNHNLENVPRIYRQVRPGADYNWSLKLLERFKEAHPEIPTKSGLMVGLGETNEEIIEVMRDLRRHGVTMLTLGQYLQPSRHHLPVQRYVSPDEFDEMKAEALAMGFTHAACGPFVRSSYHADLQAKGMEVK</sequence>
<protein>
    <recommendedName>
        <fullName evidence="1">Lipoyl synthase</fullName>
        <ecNumber evidence="1">2.8.1.8</ecNumber>
    </recommendedName>
    <alternativeName>
        <fullName evidence="1">Lip-syn</fullName>
        <shortName evidence="1">LS</shortName>
    </alternativeName>
    <alternativeName>
        <fullName evidence="1">Lipoate synthase</fullName>
    </alternativeName>
    <alternativeName>
        <fullName evidence="1">Lipoic acid synthase</fullName>
    </alternativeName>
    <alternativeName>
        <fullName evidence="1">Sulfur insertion protein LipA</fullName>
    </alternativeName>
</protein>
<proteinExistence type="inferred from homology"/>
<accession>B7N9N3</accession>
<dbReference type="EC" id="2.8.1.8" evidence="1"/>
<dbReference type="EMBL" id="CU928163">
    <property type="protein sequence ID" value="CAR11934.1"/>
    <property type="molecule type" value="Genomic_DNA"/>
</dbReference>
<dbReference type="RefSeq" id="WP_000042632.1">
    <property type="nucleotide sequence ID" value="NC_011751.1"/>
</dbReference>
<dbReference type="RefSeq" id="YP_002411480.1">
    <property type="nucleotide sequence ID" value="NC_011751.1"/>
</dbReference>
<dbReference type="SMR" id="B7N9N3"/>
<dbReference type="STRING" id="585056.ECUMN_0720"/>
<dbReference type="GeneID" id="93776854"/>
<dbReference type="KEGG" id="eum:ECUMN_0720"/>
<dbReference type="PATRIC" id="fig|585056.7.peg.918"/>
<dbReference type="HOGENOM" id="CLU_033144_2_1_6"/>
<dbReference type="UniPathway" id="UPA00538">
    <property type="reaction ID" value="UER00593"/>
</dbReference>
<dbReference type="Proteomes" id="UP000007097">
    <property type="component" value="Chromosome"/>
</dbReference>
<dbReference type="GO" id="GO:0005737">
    <property type="term" value="C:cytoplasm"/>
    <property type="evidence" value="ECO:0007669"/>
    <property type="project" value="UniProtKB-SubCell"/>
</dbReference>
<dbReference type="GO" id="GO:0051539">
    <property type="term" value="F:4 iron, 4 sulfur cluster binding"/>
    <property type="evidence" value="ECO:0007669"/>
    <property type="project" value="UniProtKB-UniRule"/>
</dbReference>
<dbReference type="GO" id="GO:0016992">
    <property type="term" value="F:lipoate synthase activity"/>
    <property type="evidence" value="ECO:0007669"/>
    <property type="project" value="UniProtKB-UniRule"/>
</dbReference>
<dbReference type="GO" id="GO:0046872">
    <property type="term" value="F:metal ion binding"/>
    <property type="evidence" value="ECO:0007669"/>
    <property type="project" value="UniProtKB-KW"/>
</dbReference>
<dbReference type="CDD" id="cd01335">
    <property type="entry name" value="Radical_SAM"/>
    <property type="match status" value="1"/>
</dbReference>
<dbReference type="FunFam" id="3.20.20.70:FF:000023">
    <property type="entry name" value="Lipoyl synthase"/>
    <property type="match status" value="1"/>
</dbReference>
<dbReference type="Gene3D" id="3.20.20.70">
    <property type="entry name" value="Aldolase class I"/>
    <property type="match status" value="1"/>
</dbReference>
<dbReference type="HAMAP" id="MF_00206">
    <property type="entry name" value="Lipoyl_synth"/>
    <property type="match status" value="1"/>
</dbReference>
<dbReference type="InterPro" id="IPR013785">
    <property type="entry name" value="Aldolase_TIM"/>
</dbReference>
<dbReference type="InterPro" id="IPR006638">
    <property type="entry name" value="Elp3/MiaA/NifB-like_rSAM"/>
</dbReference>
<dbReference type="InterPro" id="IPR031691">
    <property type="entry name" value="LIAS_N"/>
</dbReference>
<dbReference type="InterPro" id="IPR003698">
    <property type="entry name" value="Lipoyl_synth"/>
</dbReference>
<dbReference type="InterPro" id="IPR007197">
    <property type="entry name" value="rSAM"/>
</dbReference>
<dbReference type="NCBIfam" id="TIGR00510">
    <property type="entry name" value="lipA"/>
    <property type="match status" value="1"/>
</dbReference>
<dbReference type="NCBIfam" id="NF004019">
    <property type="entry name" value="PRK05481.1"/>
    <property type="match status" value="1"/>
</dbReference>
<dbReference type="NCBIfam" id="NF009544">
    <property type="entry name" value="PRK12928.1"/>
    <property type="match status" value="1"/>
</dbReference>
<dbReference type="PANTHER" id="PTHR10949">
    <property type="entry name" value="LIPOYL SYNTHASE"/>
    <property type="match status" value="1"/>
</dbReference>
<dbReference type="PANTHER" id="PTHR10949:SF0">
    <property type="entry name" value="LIPOYL SYNTHASE, MITOCHONDRIAL"/>
    <property type="match status" value="1"/>
</dbReference>
<dbReference type="Pfam" id="PF16881">
    <property type="entry name" value="LIAS_N"/>
    <property type="match status" value="1"/>
</dbReference>
<dbReference type="Pfam" id="PF04055">
    <property type="entry name" value="Radical_SAM"/>
    <property type="match status" value="1"/>
</dbReference>
<dbReference type="PIRSF" id="PIRSF005963">
    <property type="entry name" value="Lipoyl_synth"/>
    <property type="match status" value="1"/>
</dbReference>
<dbReference type="SFLD" id="SFLDF00271">
    <property type="entry name" value="lipoyl_synthase"/>
    <property type="match status" value="1"/>
</dbReference>
<dbReference type="SFLD" id="SFLDG01058">
    <property type="entry name" value="lipoyl_synthase_like"/>
    <property type="match status" value="1"/>
</dbReference>
<dbReference type="SMART" id="SM00729">
    <property type="entry name" value="Elp3"/>
    <property type="match status" value="1"/>
</dbReference>
<dbReference type="SUPFAM" id="SSF102114">
    <property type="entry name" value="Radical SAM enzymes"/>
    <property type="match status" value="1"/>
</dbReference>
<dbReference type="PROSITE" id="PS51918">
    <property type="entry name" value="RADICAL_SAM"/>
    <property type="match status" value="1"/>
</dbReference>
<gene>
    <name evidence="1" type="primary">lipA</name>
    <name type="ordered locus">ECUMN_0720</name>
</gene>
<organism>
    <name type="scientific">Escherichia coli O17:K52:H18 (strain UMN026 / ExPEC)</name>
    <dbReference type="NCBI Taxonomy" id="585056"/>
    <lineage>
        <taxon>Bacteria</taxon>
        <taxon>Pseudomonadati</taxon>
        <taxon>Pseudomonadota</taxon>
        <taxon>Gammaproteobacteria</taxon>
        <taxon>Enterobacterales</taxon>
        <taxon>Enterobacteriaceae</taxon>
        <taxon>Escherichia</taxon>
    </lineage>
</organism>
<reference key="1">
    <citation type="journal article" date="2009" name="PLoS Genet.">
        <title>Organised genome dynamics in the Escherichia coli species results in highly diverse adaptive paths.</title>
        <authorList>
            <person name="Touchon M."/>
            <person name="Hoede C."/>
            <person name="Tenaillon O."/>
            <person name="Barbe V."/>
            <person name="Baeriswyl S."/>
            <person name="Bidet P."/>
            <person name="Bingen E."/>
            <person name="Bonacorsi S."/>
            <person name="Bouchier C."/>
            <person name="Bouvet O."/>
            <person name="Calteau A."/>
            <person name="Chiapello H."/>
            <person name="Clermont O."/>
            <person name="Cruveiller S."/>
            <person name="Danchin A."/>
            <person name="Diard M."/>
            <person name="Dossat C."/>
            <person name="Karoui M.E."/>
            <person name="Frapy E."/>
            <person name="Garry L."/>
            <person name="Ghigo J.M."/>
            <person name="Gilles A.M."/>
            <person name="Johnson J."/>
            <person name="Le Bouguenec C."/>
            <person name="Lescat M."/>
            <person name="Mangenot S."/>
            <person name="Martinez-Jehanne V."/>
            <person name="Matic I."/>
            <person name="Nassif X."/>
            <person name="Oztas S."/>
            <person name="Petit M.A."/>
            <person name="Pichon C."/>
            <person name="Rouy Z."/>
            <person name="Ruf C.S."/>
            <person name="Schneider D."/>
            <person name="Tourret J."/>
            <person name="Vacherie B."/>
            <person name="Vallenet D."/>
            <person name="Medigue C."/>
            <person name="Rocha E.P.C."/>
            <person name="Denamur E."/>
        </authorList>
    </citation>
    <scope>NUCLEOTIDE SEQUENCE [LARGE SCALE GENOMIC DNA]</scope>
    <source>
        <strain>UMN026 / ExPEC</strain>
    </source>
</reference>